<protein>
    <recommendedName>
        <fullName evidence="1">Co-chaperonin GroES</fullName>
    </recommendedName>
    <alternativeName>
        <fullName evidence="1">10 kDa chaperonin</fullName>
    </alternativeName>
    <alternativeName>
        <fullName evidence="1">Chaperonin-10</fullName>
        <shortName evidence="1">Cpn10</shortName>
    </alternativeName>
</protein>
<keyword id="KW-0143">Chaperone</keyword>
<keyword id="KW-0963">Cytoplasm</keyword>
<keyword id="KW-1185">Reference proteome</keyword>
<sequence length="103" mass="11066">MAALSLSVSTVKPLSDRVFVKVNASEEKTAGGLYLPDTAKEKPQVGEVVALGPGKRNEDGSRQELEIKVGDKVLYSKYAGTDIKLGTEEYVLLSEKDILAVVI</sequence>
<proteinExistence type="inferred from homology"/>
<comment type="function">
    <text evidence="1">Together with the chaperonin GroEL, plays an essential role in assisting protein folding. The GroEL-GroES system forms a nano-cage that allows encapsulation of the non-native substrate proteins and provides a physical environment optimized to promote and accelerate protein folding. GroES binds to the apical surface of the GroEL ring, thereby capping the opening of the GroEL channel.</text>
</comment>
<comment type="subunit">
    <text evidence="1">Heptamer of 7 subunits arranged in a ring. Interacts with the chaperonin GroEL.</text>
</comment>
<comment type="subcellular location">
    <subcellularLocation>
        <location evidence="1">Cytoplasm</location>
    </subcellularLocation>
</comment>
<comment type="similarity">
    <text evidence="1">Belongs to the GroES chaperonin family.</text>
</comment>
<feature type="chain" id="PRO_1000129685" description="Co-chaperonin GroES">
    <location>
        <begin position="1"/>
        <end position="103"/>
    </location>
</feature>
<name>CH10_NOSP7</name>
<accession>B2IT70</accession>
<organism>
    <name type="scientific">Nostoc punctiforme (strain ATCC 29133 / PCC 73102)</name>
    <dbReference type="NCBI Taxonomy" id="63737"/>
    <lineage>
        <taxon>Bacteria</taxon>
        <taxon>Bacillati</taxon>
        <taxon>Cyanobacteriota</taxon>
        <taxon>Cyanophyceae</taxon>
        <taxon>Nostocales</taxon>
        <taxon>Nostocaceae</taxon>
        <taxon>Nostoc</taxon>
    </lineage>
</organism>
<reference key="1">
    <citation type="journal article" date="2013" name="Plant Physiol.">
        <title>A Nostoc punctiforme Sugar Transporter Necessary to Establish a Cyanobacterium-Plant Symbiosis.</title>
        <authorList>
            <person name="Ekman M."/>
            <person name="Picossi S."/>
            <person name="Campbell E.L."/>
            <person name="Meeks J.C."/>
            <person name="Flores E."/>
        </authorList>
    </citation>
    <scope>NUCLEOTIDE SEQUENCE [LARGE SCALE GENOMIC DNA]</scope>
    <source>
        <strain>ATCC 29133 / PCC 73102</strain>
    </source>
</reference>
<gene>
    <name evidence="1" type="primary">groES</name>
    <name evidence="1" type="synonym">groS</name>
    <name type="ordered locus">Npun_R0830</name>
</gene>
<evidence type="ECO:0000255" key="1">
    <source>
        <dbReference type="HAMAP-Rule" id="MF_00580"/>
    </source>
</evidence>
<dbReference type="EMBL" id="CP001037">
    <property type="protein sequence ID" value="ACC79568.1"/>
    <property type="molecule type" value="Genomic_DNA"/>
</dbReference>
<dbReference type="RefSeq" id="WP_012407590.1">
    <property type="nucleotide sequence ID" value="NC_010628.1"/>
</dbReference>
<dbReference type="SMR" id="B2IT70"/>
<dbReference type="STRING" id="63737.Npun_R0830"/>
<dbReference type="EnsemblBacteria" id="ACC79568">
    <property type="protein sequence ID" value="ACC79568"/>
    <property type="gene ID" value="Npun_R0830"/>
</dbReference>
<dbReference type="KEGG" id="npu:Npun_R0830"/>
<dbReference type="eggNOG" id="COG0234">
    <property type="taxonomic scope" value="Bacteria"/>
</dbReference>
<dbReference type="HOGENOM" id="CLU_132825_2_1_3"/>
<dbReference type="OrthoDB" id="9806791at2"/>
<dbReference type="PhylomeDB" id="B2IT70"/>
<dbReference type="Proteomes" id="UP000001191">
    <property type="component" value="Chromosome"/>
</dbReference>
<dbReference type="GO" id="GO:0005737">
    <property type="term" value="C:cytoplasm"/>
    <property type="evidence" value="ECO:0007669"/>
    <property type="project" value="UniProtKB-SubCell"/>
</dbReference>
<dbReference type="GO" id="GO:0005524">
    <property type="term" value="F:ATP binding"/>
    <property type="evidence" value="ECO:0007669"/>
    <property type="project" value="InterPro"/>
</dbReference>
<dbReference type="GO" id="GO:0046872">
    <property type="term" value="F:metal ion binding"/>
    <property type="evidence" value="ECO:0007669"/>
    <property type="project" value="TreeGrafter"/>
</dbReference>
<dbReference type="GO" id="GO:0044183">
    <property type="term" value="F:protein folding chaperone"/>
    <property type="evidence" value="ECO:0007669"/>
    <property type="project" value="InterPro"/>
</dbReference>
<dbReference type="GO" id="GO:0051087">
    <property type="term" value="F:protein-folding chaperone binding"/>
    <property type="evidence" value="ECO:0007669"/>
    <property type="project" value="TreeGrafter"/>
</dbReference>
<dbReference type="GO" id="GO:0051082">
    <property type="term" value="F:unfolded protein binding"/>
    <property type="evidence" value="ECO:0007669"/>
    <property type="project" value="TreeGrafter"/>
</dbReference>
<dbReference type="GO" id="GO:0051085">
    <property type="term" value="P:chaperone cofactor-dependent protein refolding"/>
    <property type="evidence" value="ECO:0007669"/>
    <property type="project" value="TreeGrafter"/>
</dbReference>
<dbReference type="CDD" id="cd00320">
    <property type="entry name" value="cpn10"/>
    <property type="match status" value="1"/>
</dbReference>
<dbReference type="FunFam" id="2.30.33.40:FF:000001">
    <property type="entry name" value="10 kDa chaperonin"/>
    <property type="match status" value="1"/>
</dbReference>
<dbReference type="Gene3D" id="2.30.33.40">
    <property type="entry name" value="GroES chaperonin"/>
    <property type="match status" value="1"/>
</dbReference>
<dbReference type="HAMAP" id="MF_00580">
    <property type="entry name" value="CH10"/>
    <property type="match status" value="1"/>
</dbReference>
<dbReference type="InterPro" id="IPR020818">
    <property type="entry name" value="Chaperonin_GroES"/>
</dbReference>
<dbReference type="InterPro" id="IPR037124">
    <property type="entry name" value="Chaperonin_GroES_sf"/>
</dbReference>
<dbReference type="InterPro" id="IPR018369">
    <property type="entry name" value="Chaprnonin_Cpn10_CS"/>
</dbReference>
<dbReference type="InterPro" id="IPR011032">
    <property type="entry name" value="GroES-like_sf"/>
</dbReference>
<dbReference type="NCBIfam" id="NF001530">
    <property type="entry name" value="PRK00364.1-6"/>
    <property type="match status" value="1"/>
</dbReference>
<dbReference type="NCBIfam" id="NF001531">
    <property type="entry name" value="PRK00364.2-2"/>
    <property type="match status" value="1"/>
</dbReference>
<dbReference type="NCBIfam" id="NF001533">
    <property type="entry name" value="PRK00364.2-4"/>
    <property type="match status" value="1"/>
</dbReference>
<dbReference type="NCBIfam" id="NF001534">
    <property type="entry name" value="PRK00364.2-5"/>
    <property type="match status" value="1"/>
</dbReference>
<dbReference type="PANTHER" id="PTHR10772">
    <property type="entry name" value="10 KDA HEAT SHOCK PROTEIN"/>
    <property type="match status" value="1"/>
</dbReference>
<dbReference type="PANTHER" id="PTHR10772:SF58">
    <property type="entry name" value="CO-CHAPERONIN GROES"/>
    <property type="match status" value="1"/>
</dbReference>
<dbReference type="Pfam" id="PF00166">
    <property type="entry name" value="Cpn10"/>
    <property type="match status" value="1"/>
</dbReference>
<dbReference type="PRINTS" id="PR00297">
    <property type="entry name" value="CHAPERONIN10"/>
</dbReference>
<dbReference type="SMART" id="SM00883">
    <property type="entry name" value="Cpn10"/>
    <property type="match status" value="1"/>
</dbReference>
<dbReference type="SUPFAM" id="SSF50129">
    <property type="entry name" value="GroES-like"/>
    <property type="match status" value="1"/>
</dbReference>
<dbReference type="PROSITE" id="PS00681">
    <property type="entry name" value="CHAPERONINS_CPN10"/>
    <property type="match status" value="1"/>
</dbReference>